<evidence type="ECO:0000255" key="1">
    <source>
        <dbReference type="HAMAP-Rule" id="MF_00708"/>
    </source>
</evidence>
<gene>
    <name evidence="1" type="primary">frdC</name>
    <name type="ordered locus">HD_0033</name>
</gene>
<sequence length="128" mass="14694">MTTKRKAYVREMKANWWTKLDFYRMYMIREATCIATIWFCLVLLYGVISLGGRHIENFISFSQNPLVVILNIISLAGLLYHAATLYVMTPQVLTIVVKNERLNPNILKNALWAITGLVSLLALVLVYI</sequence>
<reference key="1">
    <citation type="submission" date="2003-06" db="EMBL/GenBank/DDBJ databases">
        <title>The complete genome sequence of Haemophilus ducreyi.</title>
        <authorList>
            <person name="Munson R.S. Jr."/>
            <person name="Ray W.C."/>
            <person name="Mahairas G."/>
            <person name="Sabo P."/>
            <person name="Mungur R."/>
            <person name="Johnson L."/>
            <person name="Nguyen D."/>
            <person name="Wang J."/>
            <person name="Forst C."/>
            <person name="Hood L."/>
        </authorList>
    </citation>
    <scope>NUCLEOTIDE SEQUENCE [LARGE SCALE GENOMIC DNA]</scope>
    <source>
        <strain>35000HP / ATCC 700724</strain>
    </source>
</reference>
<protein>
    <recommendedName>
        <fullName evidence="1">Fumarate reductase subunit C</fullName>
    </recommendedName>
    <alternativeName>
        <fullName evidence="1">Quinol-fumarate reductase subunit C</fullName>
        <shortName evidence="1">QFR subunit C</shortName>
    </alternativeName>
</protein>
<organism>
    <name type="scientific">Haemophilus ducreyi (strain 35000HP / ATCC 700724)</name>
    <dbReference type="NCBI Taxonomy" id="233412"/>
    <lineage>
        <taxon>Bacteria</taxon>
        <taxon>Pseudomonadati</taxon>
        <taxon>Pseudomonadota</taxon>
        <taxon>Gammaproteobacteria</taxon>
        <taxon>Pasteurellales</taxon>
        <taxon>Pasteurellaceae</taxon>
        <taxon>Haemophilus</taxon>
    </lineage>
</organism>
<accession>P59841</accession>
<comment type="function">
    <text evidence="1">Anchors the catalytic components of the fumarate reductase complex to the cell membrane, binds quinones.</text>
</comment>
<comment type="subunit">
    <text evidence="1">Part of an enzyme complex containing four subunits: a flavoprotein (FrdA), an iron-sulfur protein (FrdB), and two hydrophobic anchor proteins (FrdC and FrdD).</text>
</comment>
<comment type="subcellular location">
    <subcellularLocation>
        <location evidence="1">Cell inner membrane</location>
        <topology evidence="1">Multi-pass membrane protein</topology>
    </subcellularLocation>
</comment>
<comment type="similarity">
    <text evidence="1">Belongs to the FrdC family.</text>
</comment>
<dbReference type="EMBL" id="AE017143">
    <property type="protein sequence ID" value="AAP95048.1"/>
    <property type="molecule type" value="Genomic_DNA"/>
</dbReference>
<dbReference type="RefSeq" id="WP_010944102.1">
    <property type="nucleotide sequence ID" value="NC_002940.2"/>
</dbReference>
<dbReference type="SMR" id="P59841"/>
<dbReference type="STRING" id="233412.HD_0033"/>
<dbReference type="KEGG" id="hdu:HD_0033"/>
<dbReference type="eggNOG" id="COG3029">
    <property type="taxonomic scope" value="Bacteria"/>
</dbReference>
<dbReference type="HOGENOM" id="CLU_156492_0_0_6"/>
<dbReference type="OrthoDB" id="8909678at2"/>
<dbReference type="Proteomes" id="UP000001022">
    <property type="component" value="Chromosome"/>
</dbReference>
<dbReference type="GO" id="GO:0045283">
    <property type="term" value="C:fumarate reductase complex"/>
    <property type="evidence" value="ECO:0007669"/>
    <property type="project" value="UniProtKB-UniRule"/>
</dbReference>
<dbReference type="GO" id="GO:0005886">
    <property type="term" value="C:plasma membrane"/>
    <property type="evidence" value="ECO:0007669"/>
    <property type="project" value="UniProtKB-SubCell"/>
</dbReference>
<dbReference type="GO" id="GO:0000104">
    <property type="term" value="F:succinate dehydrogenase activity"/>
    <property type="evidence" value="ECO:0007669"/>
    <property type="project" value="UniProtKB-UniRule"/>
</dbReference>
<dbReference type="CDD" id="cd00546">
    <property type="entry name" value="QFR_TypeD_subunitC"/>
    <property type="match status" value="1"/>
</dbReference>
<dbReference type="Gene3D" id="1.20.1300.10">
    <property type="entry name" value="Fumarate reductase/succinate dehydrogenase, transmembrane subunit"/>
    <property type="match status" value="1"/>
</dbReference>
<dbReference type="HAMAP" id="MF_00708">
    <property type="entry name" value="Fumarate_red_C"/>
    <property type="match status" value="1"/>
</dbReference>
<dbReference type="InterPro" id="IPR003510">
    <property type="entry name" value="Fumarate_red_C"/>
</dbReference>
<dbReference type="InterPro" id="IPR034804">
    <property type="entry name" value="SQR/QFR_C/D"/>
</dbReference>
<dbReference type="NCBIfam" id="NF003445">
    <property type="entry name" value="PRK04987.1"/>
    <property type="match status" value="1"/>
</dbReference>
<dbReference type="Pfam" id="PF02300">
    <property type="entry name" value="Fumarate_red_C"/>
    <property type="match status" value="1"/>
</dbReference>
<dbReference type="PIRSF" id="PIRSF000180">
    <property type="entry name" value="FrdC"/>
    <property type="match status" value="1"/>
</dbReference>
<dbReference type="SUPFAM" id="SSF81343">
    <property type="entry name" value="Fumarate reductase respiratory complex transmembrane subunits"/>
    <property type="match status" value="1"/>
</dbReference>
<feature type="chain" id="PRO_0000196529" description="Fumarate reductase subunit C">
    <location>
        <begin position="1"/>
        <end position="128"/>
    </location>
</feature>
<feature type="transmembrane region" description="Helical" evidence="1">
    <location>
        <begin position="31"/>
        <end position="51"/>
    </location>
</feature>
<feature type="transmembrane region" description="Helical" evidence="1">
    <location>
        <begin position="67"/>
        <end position="87"/>
    </location>
</feature>
<feature type="transmembrane region" description="Helical" evidence="1">
    <location>
        <begin position="106"/>
        <end position="126"/>
    </location>
</feature>
<keyword id="KW-0997">Cell inner membrane</keyword>
<keyword id="KW-1003">Cell membrane</keyword>
<keyword id="KW-0472">Membrane</keyword>
<keyword id="KW-1185">Reference proteome</keyword>
<keyword id="KW-0812">Transmembrane</keyword>
<keyword id="KW-1133">Transmembrane helix</keyword>
<name>FRDC_HAEDU</name>
<proteinExistence type="inferred from homology"/>